<comment type="function">
    <text evidence="1">Catalyzes the ATP-dependent phosphorylation of L-homoserine to L-homoserine phosphate.</text>
</comment>
<comment type="catalytic activity">
    <reaction evidence="1">
        <text>L-homoserine + ATP = O-phospho-L-homoserine + ADP + H(+)</text>
        <dbReference type="Rhea" id="RHEA:13985"/>
        <dbReference type="ChEBI" id="CHEBI:15378"/>
        <dbReference type="ChEBI" id="CHEBI:30616"/>
        <dbReference type="ChEBI" id="CHEBI:57476"/>
        <dbReference type="ChEBI" id="CHEBI:57590"/>
        <dbReference type="ChEBI" id="CHEBI:456216"/>
        <dbReference type="EC" id="2.7.1.39"/>
    </reaction>
</comment>
<comment type="pathway">
    <text evidence="1">Amino-acid biosynthesis; L-threonine biosynthesis; L-threonine from L-aspartate: step 4/5.</text>
</comment>
<comment type="subcellular location">
    <subcellularLocation>
        <location evidence="1">Cytoplasm</location>
    </subcellularLocation>
</comment>
<comment type="similarity">
    <text evidence="1">Belongs to the GHMP kinase family. Homoserine kinase subfamily.</text>
</comment>
<gene>
    <name evidence="1" type="primary">thrB</name>
    <name type="ordered locus">CLI_1716</name>
</gene>
<accession>A7GDW6</accession>
<sequence length="297" mass="32733">MVEVRVPATSANIGPGFDCLGVAVNIYNKFFVEEVEEGIIFEGCADKFKNENNLIYVAMKKCFDKIGYKPTGLRIKIESDIPVSRGLGSSAACVVGGIVSANELAGGALNKKELLDLAVEVEGHPDNVNPAFCGGMTASISDNREVIYSKVKVSEGIKFCALIPDFTLSTEKARAVLPKSIDYKDGIFNVGRTALMISALNNGDFHLIKYACKDKLHQDYRAKLIENFYSIKKQCEKLNSLGVFLSGAGPTIMVMLREEDKDFSKNIKSFLETLKNKWEVRELKIDKLGTVVNNRKL</sequence>
<evidence type="ECO:0000255" key="1">
    <source>
        <dbReference type="HAMAP-Rule" id="MF_00384"/>
    </source>
</evidence>
<keyword id="KW-0028">Amino-acid biosynthesis</keyword>
<keyword id="KW-0067">ATP-binding</keyword>
<keyword id="KW-0963">Cytoplasm</keyword>
<keyword id="KW-0418">Kinase</keyword>
<keyword id="KW-0547">Nucleotide-binding</keyword>
<keyword id="KW-0791">Threonine biosynthesis</keyword>
<keyword id="KW-0808">Transferase</keyword>
<dbReference type="EC" id="2.7.1.39" evidence="1"/>
<dbReference type="EMBL" id="CP000728">
    <property type="protein sequence ID" value="ABS39991.1"/>
    <property type="molecule type" value="Genomic_DNA"/>
</dbReference>
<dbReference type="RefSeq" id="WP_012099725.1">
    <property type="nucleotide sequence ID" value="NC_009699.1"/>
</dbReference>
<dbReference type="SMR" id="A7GDW6"/>
<dbReference type="KEGG" id="cbf:CLI_1716"/>
<dbReference type="HOGENOM" id="CLU_041243_0_2_9"/>
<dbReference type="UniPathway" id="UPA00050">
    <property type="reaction ID" value="UER00064"/>
</dbReference>
<dbReference type="Proteomes" id="UP000002410">
    <property type="component" value="Chromosome"/>
</dbReference>
<dbReference type="GO" id="GO:0005737">
    <property type="term" value="C:cytoplasm"/>
    <property type="evidence" value="ECO:0007669"/>
    <property type="project" value="UniProtKB-SubCell"/>
</dbReference>
<dbReference type="GO" id="GO:0005524">
    <property type="term" value="F:ATP binding"/>
    <property type="evidence" value="ECO:0007669"/>
    <property type="project" value="UniProtKB-UniRule"/>
</dbReference>
<dbReference type="GO" id="GO:0004413">
    <property type="term" value="F:homoserine kinase activity"/>
    <property type="evidence" value="ECO:0007669"/>
    <property type="project" value="UniProtKB-UniRule"/>
</dbReference>
<dbReference type="GO" id="GO:0009088">
    <property type="term" value="P:threonine biosynthetic process"/>
    <property type="evidence" value="ECO:0007669"/>
    <property type="project" value="UniProtKB-UniRule"/>
</dbReference>
<dbReference type="Gene3D" id="3.30.230.10">
    <property type="match status" value="1"/>
</dbReference>
<dbReference type="Gene3D" id="3.30.70.890">
    <property type="entry name" value="GHMP kinase, C-terminal domain"/>
    <property type="match status" value="1"/>
</dbReference>
<dbReference type="HAMAP" id="MF_00384">
    <property type="entry name" value="Homoser_kinase"/>
    <property type="match status" value="1"/>
</dbReference>
<dbReference type="InterPro" id="IPR013750">
    <property type="entry name" value="GHMP_kinase_C_dom"/>
</dbReference>
<dbReference type="InterPro" id="IPR036554">
    <property type="entry name" value="GHMP_kinase_C_sf"/>
</dbReference>
<dbReference type="InterPro" id="IPR006204">
    <property type="entry name" value="GHMP_kinase_N_dom"/>
</dbReference>
<dbReference type="InterPro" id="IPR006203">
    <property type="entry name" value="GHMP_knse_ATP-bd_CS"/>
</dbReference>
<dbReference type="InterPro" id="IPR000870">
    <property type="entry name" value="Homoserine_kinase"/>
</dbReference>
<dbReference type="InterPro" id="IPR020568">
    <property type="entry name" value="Ribosomal_Su5_D2-typ_SF"/>
</dbReference>
<dbReference type="InterPro" id="IPR014721">
    <property type="entry name" value="Ribsml_uS5_D2-typ_fold_subgr"/>
</dbReference>
<dbReference type="NCBIfam" id="NF002288">
    <property type="entry name" value="PRK01212.1-4"/>
    <property type="match status" value="1"/>
</dbReference>
<dbReference type="NCBIfam" id="TIGR00191">
    <property type="entry name" value="thrB"/>
    <property type="match status" value="1"/>
</dbReference>
<dbReference type="PANTHER" id="PTHR20861:SF1">
    <property type="entry name" value="HOMOSERINE KINASE"/>
    <property type="match status" value="1"/>
</dbReference>
<dbReference type="PANTHER" id="PTHR20861">
    <property type="entry name" value="HOMOSERINE/4-DIPHOSPHOCYTIDYL-2-C-METHYL-D-ERYTHRITOL KINASE"/>
    <property type="match status" value="1"/>
</dbReference>
<dbReference type="Pfam" id="PF08544">
    <property type="entry name" value="GHMP_kinases_C"/>
    <property type="match status" value="1"/>
</dbReference>
<dbReference type="Pfam" id="PF00288">
    <property type="entry name" value="GHMP_kinases_N"/>
    <property type="match status" value="1"/>
</dbReference>
<dbReference type="PIRSF" id="PIRSF000676">
    <property type="entry name" value="Homoser_kin"/>
    <property type="match status" value="1"/>
</dbReference>
<dbReference type="PRINTS" id="PR00958">
    <property type="entry name" value="HOMSERKINASE"/>
</dbReference>
<dbReference type="SUPFAM" id="SSF55060">
    <property type="entry name" value="GHMP Kinase, C-terminal domain"/>
    <property type="match status" value="1"/>
</dbReference>
<dbReference type="SUPFAM" id="SSF54211">
    <property type="entry name" value="Ribosomal protein S5 domain 2-like"/>
    <property type="match status" value="1"/>
</dbReference>
<dbReference type="PROSITE" id="PS00627">
    <property type="entry name" value="GHMP_KINASES_ATP"/>
    <property type="match status" value="1"/>
</dbReference>
<feature type="chain" id="PRO_1000049124" description="Homoserine kinase">
    <location>
        <begin position="1"/>
        <end position="297"/>
    </location>
</feature>
<feature type="binding site" evidence="1">
    <location>
        <begin position="82"/>
        <end position="92"/>
    </location>
    <ligand>
        <name>ATP</name>
        <dbReference type="ChEBI" id="CHEBI:30616"/>
    </ligand>
</feature>
<protein>
    <recommendedName>
        <fullName evidence="1">Homoserine kinase</fullName>
        <shortName evidence="1">HK</shortName>
        <shortName evidence="1">HSK</shortName>
        <ecNumber evidence="1">2.7.1.39</ecNumber>
    </recommendedName>
</protein>
<name>KHSE_CLOBL</name>
<proteinExistence type="inferred from homology"/>
<organism>
    <name type="scientific">Clostridium botulinum (strain Langeland / NCTC 10281 / Type F)</name>
    <dbReference type="NCBI Taxonomy" id="441772"/>
    <lineage>
        <taxon>Bacteria</taxon>
        <taxon>Bacillati</taxon>
        <taxon>Bacillota</taxon>
        <taxon>Clostridia</taxon>
        <taxon>Eubacteriales</taxon>
        <taxon>Clostridiaceae</taxon>
        <taxon>Clostridium</taxon>
    </lineage>
</organism>
<reference key="1">
    <citation type="submission" date="2007-06" db="EMBL/GenBank/DDBJ databases">
        <authorList>
            <person name="Brinkac L.M."/>
            <person name="Daugherty S."/>
            <person name="Dodson R.J."/>
            <person name="Madupu R."/>
            <person name="Brown J.L."/>
            <person name="Bruce D."/>
            <person name="Detter C."/>
            <person name="Munk C."/>
            <person name="Smith L.A."/>
            <person name="Smith T.J."/>
            <person name="White O."/>
            <person name="Brettin T.S."/>
        </authorList>
    </citation>
    <scope>NUCLEOTIDE SEQUENCE [LARGE SCALE GENOMIC DNA]</scope>
    <source>
        <strain>Langeland / NCTC 10281 / Type F</strain>
    </source>
</reference>